<accession>Q7UDT4</accession>
<feature type="chain" id="PRO_0000259345" description="L-arabinose isomerase">
    <location>
        <begin position="1"/>
        <end position="500"/>
    </location>
</feature>
<feature type="binding site" evidence="1">
    <location>
        <position position="306"/>
    </location>
    <ligand>
        <name>Mn(2+)</name>
        <dbReference type="ChEBI" id="CHEBI:29035"/>
    </ligand>
</feature>
<feature type="binding site" evidence="1">
    <location>
        <position position="333"/>
    </location>
    <ligand>
        <name>Mn(2+)</name>
        <dbReference type="ChEBI" id="CHEBI:29035"/>
    </ligand>
</feature>
<feature type="binding site" evidence="1">
    <location>
        <position position="350"/>
    </location>
    <ligand>
        <name>Mn(2+)</name>
        <dbReference type="ChEBI" id="CHEBI:29035"/>
    </ligand>
</feature>
<feature type="binding site" evidence="1">
    <location>
        <position position="450"/>
    </location>
    <ligand>
        <name>Mn(2+)</name>
        <dbReference type="ChEBI" id="CHEBI:29035"/>
    </ligand>
</feature>
<gene>
    <name evidence="1" type="primary">araA</name>
    <name type="ordered locus">S0059</name>
</gene>
<name>ARAA_SHIFL</name>
<comment type="function">
    <text evidence="1">Catalyzes the conversion of L-arabinose to L-ribulose.</text>
</comment>
<comment type="catalytic activity">
    <reaction evidence="1">
        <text>beta-L-arabinopyranose = L-ribulose</text>
        <dbReference type="Rhea" id="RHEA:14821"/>
        <dbReference type="ChEBI" id="CHEBI:16880"/>
        <dbReference type="ChEBI" id="CHEBI:40886"/>
        <dbReference type="EC" id="5.3.1.4"/>
    </reaction>
</comment>
<comment type="cofactor">
    <cofactor evidence="1">
        <name>Mn(2+)</name>
        <dbReference type="ChEBI" id="CHEBI:29035"/>
    </cofactor>
    <text evidence="1">Binds 1 Mn(2+) ion per subunit.</text>
</comment>
<comment type="pathway">
    <text evidence="1">Carbohydrate degradation; L-arabinose degradation via L-ribulose; D-xylulose 5-phosphate from L-arabinose (bacterial route): step 1/3.</text>
</comment>
<comment type="subunit">
    <text evidence="1">Homohexamer.</text>
</comment>
<comment type="similarity">
    <text evidence="1">Belongs to the arabinose isomerase family.</text>
</comment>
<comment type="caution">
    <text evidence="2">This gene is interrupted by a stop codon in strain 301 / Serotype 2a.</text>
</comment>
<protein>
    <recommendedName>
        <fullName evidence="1">L-arabinose isomerase</fullName>
        <ecNumber evidence="1">5.3.1.4</ecNumber>
    </recommendedName>
</protein>
<reference key="1">
    <citation type="journal article" date="2003" name="Infect. Immun.">
        <title>Complete genome sequence and comparative genomics of Shigella flexneri serotype 2a strain 2457T.</title>
        <authorList>
            <person name="Wei J."/>
            <person name="Goldberg M.B."/>
            <person name="Burland V."/>
            <person name="Venkatesan M.M."/>
            <person name="Deng W."/>
            <person name="Fournier G."/>
            <person name="Mayhew G.F."/>
            <person name="Plunkett G. III"/>
            <person name="Rose D.J."/>
            <person name="Darling A."/>
            <person name="Mau B."/>
            <person name="Perna N.T."/>
            <person name="Payne S.M."/>
            <person name="Runyen-Janecky L.J."/>
            <person name="Zhou S."/>
            <person name="Schwartz D.C."/>
            <person name="Blattner F.R."/>
        </authorList>
    </citation>
    <scope>NUCLEOTIDE SEQUENCE [LARGE SCALE GENOMIC DNA]</scope>
    <source>
        <strain>ATCC 700930 / 2457T / Serotype 2a</strain>
    </source>
</reference>
<keyword id="KW-0054">Arabinose catabolism</keyword>
<keyword id="KW-0119">Carbohydrate metabolism</keyword>
<keyword id="KW-0413">Isomerase</keyword>
<keyword id="KW-0464">Manganese</keyword>
<keyword id="KW-0479">Metal-binding</keyword>
<evidence type="ECO:0000255" key="1">
    <source>
        <dbReference type="HAMAP-Rule" id="MF_00519"/>
    </source>
</evidence>
<evidence type="ECO:0000305" key="2"/>
<dbReference type="EC" id="5.3.1.4" evidence="1"/>
<dbReference type="EMBL" id="AE014073">
    <property type="protein sequence ID" value="AAP15603.1"/>
    <property type="molecule type" value="Genomic_DNA"/>
</dbReference>
<dbReference type="RefSeq" id="WP_000963947.1">
    <property type="nucleotide sequence ID" value="NZ_WPGW01000005.1"/>
</dbReference>
<dbReference type="SMR" id="Q7UDT4"/>
<dbReference type="KEGG" id="sfx:S0059"/>
<dbReference type="PATRIC" id="fig|623.158.peg.61"/>
<dbReference type="HOGENOM" id="CLU_045663_0_0_6"/>
<dbReference type="BRENDA" id="5.3.1.4">
    <property type="organism ID" value="5712"/>
</dbReference>
<dbReference type="UniPathway" id="UPA00145">
    <property type="reaction ID" value="UER00565"/>
</dbReference>
<dbReference type="Proteomes" id="UP000002673">
    <property type="component" value="Chromosome"/>
</dbReference>
<dbReference type="GO" id="GO:0005829">
    <property type="term" value="C:cytosol"/>
    <property type="evidence" value="ECO:0007669"/>
    <property type="project" value="TreeGrafter"/>
</dbReference>
<dbReference type="GO" id="GO:0008733">
    <property type="term" value="F:L-arabinose isomerase activity"/>
    <property type="evidence" value="ECO:0007669"/>
    <property type="project" value="UniProtKB-UniRule"/>
</dbReference>
<dbReference type="GO" id="GO:0030145">
    <property type="term" value="F:manganese ion binding"/>
    <property type="evidence" value="ECO:0007669"/>
    <property type="project" value="UniProtKB-UniRule"/>
</dbReference>
<dbReference type="GO" id="GO:0019569">
    <property type="term" value="P:L-arabinose catabolic process to xylulose 5-phosphate"/>
    <property type="evidence" value="ECO:0007669"/>
    <property type="project" value="UniProtKB-UniRule"/>
</dbReference>
<dbReference type="CDD" id="cd03557">
    <property type="entry name" value="L-arabinose_isomerase"/>
    <property type="match status" value="1"/>
</dbReference>
<dbReference type="FunFam" id="3.40.50.10940:FF:000001">
    <property type="entry name" value="L-arabinose isomerase"/>
    <property type="match status" value="1"/>
</dbReference>
<dbReference type="Gene3D" id="3.40.50.10940">
    <property type="match status" value="1"/>
</dbReference>
<dbReference type="HAMAP" id="MF_00519">
    <property type="entry name" value="Arabinose_Isome"/>
    <property type="match status" value="1"/>
</dbReference>
<dbReference type="InterPro" id="IPR024664">
    <property type="entry name" value="Ara_Isoase_C"/>
</dbReference>
<dbReference type="InterPro" id="IPR055390">
    <property type="entry name" value="AraA_central"/>
</dbReference>
<dbReference type="InterPro" id="IPR055389">
    <property type="entry name" value="AraA_N"/>
</dbReference>
<dbReference type="InterPro" id="IPR038583">
    <property type="entry name" value="AraA_N_sf"/>
</dbReference>
<dbReference type="InterPro" id="IPR004216">
    <property type="entry name" value="Fuc/Ara_isomerase_C"/>
</dbReference>
<dbReference type="InterPro" id="IPR009015">
    <property type="entry name" value="Fucose_isomerase_N/cen_sf"/>
</dbReference>
<dbReference type="InterPro" id="IPR003762">
    <property type="entry name" value="Lara_isomerase"/>
</dbReference>
<dbReference type="NCBIfam" id="NF002795">
    <property type="entry name" value="PRK02929.1"/>
    <property type="match status" value="1"/>
</dbReference>
<dbReference type="PANTHER" id="PTHR38464">
    <property type="entry name" value="L-ARABINOSE ISOMERASE"/>
    <property type="match status" value="1"/>
</dbReference>
<dbReference type="PANTHER" id="PTHR38464:SF1">
    <property type="entry name" value="L-ARABINOSE ISOMERASE"/>
    <property type="match status" value="1"/>
</dbReference>
<dbReference type="Pfam" id="PF24856">
    <property type="entry name" value="AraA_central"/>
    <property type="match status" value="1"/>
</dbReference>
<dbReference type="Pfam" id="PF02610">
    <property type="entry name" value="AraA_N"/>
    <property type="match status" value="1"/>
</dbReference>
<dbReference type="Pfam" id="PF11762">
    <property type="entry name" value="Arabinose_Iso_C"/>
    <property type="match status" value="1"/>
</dbReference>
<dbReference type="PIRSF" id="PIRSF001478">
    <property type="entry name" value="L-ara_isomerase"/>
    <property type="match status" value="1"/>
</dbReference>
<dbReference type="SUPFAM" id="SSF50443">
    <property type="entry name" value="FucI/AraA C-terminal domain-like"/>
    <property type="match status" value="1"/>
</dbReference>
<dbReference type="SUPFAM" id="SSF53743">
    <property type="entry name" value="FucI/AraA N-terminal and middle domains"/>
    <property type="match status" value="1"/>
</dbReference>
<sequence>MAIFDNYEVWFVIGSQHLYGPETLRQVTQHAEHVVNALNTEAKLPYKLVLKPLGTTPDEITAICRDANYDDRCAGLVVWLHTFSPAKMWINGLTMLNKPLLQFHTQFNAALPWDSIDMDFMNLNQTAHGGREFGFIGARMRQQHAVVTGHWQDKQAHERIGSWMRQAVSKQDTRHLKVCRFGDNMREVAVTDGDKVAAQIKFGFSVNTWAVGYLVQVVNSISDGDVNALVDEYESCYTMTPATQIHGEKRQNVLEAARIELGMKRFLEQGGFHAFTTTFEDLHGLKQLPGLPVQRLMQQGYGFAGEGDWKTAALLRIMKVMSTGLQGGTSFMEDYTYHFEKGNDLVLGSHMLEVCPSIAVEEKPILDVQHLGIGGKDDPARLIFNTQTGPAIVASLIDLGDRYRLLVNCIDTVKTPHSLPKLPVANALWKAQPDLPTASEAWILAGGAHHTVFSHALNLNDMRQFAEMHDIEITVIDNDTRLPAFKDALRWNEVYYGFRR</sequence>
<organism>
    <name type="scientific">Shigella flexneri</name>
    <dbReference type="NCBI Taxonomy" id="623"/>
    <lineage>
        <taxon>Bacteria</taxon>
        <taxon>Pseudomonadati</taxon>
        <taxon>Pseudomonadota</taxon>
        <taxon>Gammaproteobacteria</taxon>
        <taxon>Enterobacterales</taxon>
        <taxon>Enterobacteriaceae</taxon>
        <taxon>Shigella</taxon>
    </lineage>
</organism>
<proteinExistence type="inferred from homology"/>